<sequence length="211" mass="22654">MKIEVKTLAAKDAGAIDLDDAVFGIEEVRSDLLQRVVKWQLAARQQGTHKTLGRSEINRTKKRFGRQKGGGTARHGARSAPQFVGGGKAHGPRVRSHAHELPKKVRALGLRHALSAKLGAKSLVIIDDAALDAPQTKALRTSFEGLGISNALVISGAEVNENFAKAARNLPCIDVLPAQGLNVYDVLRRDTLVLTKAAVEQIHARLSAKEA</sequence>
<protein>
    <recommendedName>
        <fullName evidence="1">Large ribosomal subunit protein uL4</fullName>
    </recommendedName>
    <alternativeName>
        <fullName evidence="3">50S ribosomal protein L4</fullName>
    </alternativeName>
</protein>
<comment type="function">
    <text evidence="1">One of the primary rRNA binding proteins, this protein initially binds near the 5'-end of the 23S rRNA. It is important during the early stages of 50S assembly. It makes multiple contacts with different domains of the 23S rRNA in the assembled 50S subunit and ribosome.</text>
</comment>
<comment type="function">
    <text evidence="1">Forms part of the polypeptide exit tunnel.</text>
</comment>
<comment type="subunit">
    <text evidence="1">Part of the 50S ribosomal subunit.</text>
</comment>
<comment type="similarity">
    <text evidence="1">Belongs to the universal ribosomal protein uL4 family.</text>
</comment>
<gene>
    <name evidence="1" type="primary">rplD</name>
    <name type="ordered locus">Mmar10_1794</name>
</gene>
<proteinExistence type="inferred from homology"/>
<keyword id="KW-1185">Reference proteome</keyword>
<keyword id="KW-0687">Ribonucleoprotein</keyword>
<keyword id="KW-0689">Ribosomal protein</keyword>
<keyword id="KW-0694">RNA-binding</keyword>
<keyword id="KW-0699">rRNA-binding</keyword>
<accession>Q0ANQ1</accession>
<name>RL4_MARMM</name>
<dbReference type="EMBL" id="CP000449">
    <property type="protein sequence ID" value="ABI66086.1"/>
    <property type="molecule type" value="Genomic_DNA"/>
</dbReference>
<dbReference type="RefSeq" id="WP_011643732.1">
    <property type="nucleotide sequence ID" value="NC_008347.1"/>
</dbReference>
<dbReference type="SMR" id="Q0ANQ1"/>
<dbReference type="STRING" id="394221.Mmar10_1794"/>
<dbReference type="KEGG" id="mmr:Mmar10_1794"/>
<dbReference type="eggNOG" id="COG0088">
    <property type="taxonomic scope" value="Bacteria"/>
</dbReference>
<dbReference type="HOGENOM" id="CLU_041575_5_1_5"/>
<dbReference type="OrthoDB" id="9803201at2"/>
<dbReference type="Proteomes" id="UP000001964">
    <property type="component" value="Chromosome"/>
</dbReference>
<dbReference type="GO" id="GO:1990904">
    <property type="term" value="C:ribonucleoprotein complex"/>
    <property type="evidence" value="ECO:0007669"/>
    <property type="project" value="UniProtKB-KW"/>
</dbReference>
<dbReference type="GO" id="GO:0005840">
    <property type="term" value="C:ribosome"/>
    <property type="evidence" value="ECO:0007669"/>
    <property type="project" value="UniProtKB-KW"/>
</dbReference>
<dbReference type="GO" id="GO:0019843">
    <property type="term" value="F:rRNA binding"/>
    <property type="evidence" value="ECO:0007669"/>
    <property type="project" value="UniProtKB-UniRule"/>
</dbReference>
<dbReference type="GO" id="GO:0003735">
    <property type="term" value="F:structural constituent of ribosome"/>
    <property type="evidence" value="ECO:0007669"/>
    <property type="project" value="InterPro"/>
</dbReference>
<dbReference type="GO" id="GO:0006412">
    <property type="term" value="P:translation"/>
    <property type="evidence" value="ECO:0007669"/>
    <property type="project" value="UniProtKB-UniRule"/>
</dbReference>
<dbReference type="Gene3D" id="3.40.1370.10">
    <property type="match status" value="1"/>
</dbReference>
<dbReference type="HAMAP" id="MF_01328_B">
    <property type="entry name" value="Ribosomal_uL4_B"/>
    <property type="match status" value="1"/>
</dbReference>
<dbReference type="InterPro" id="IPR002136">
    <property type="entry name" value="Ribosomal_uL4"/>
</dbReference>
<dbReference type="InterPro" id="IPR013005">
    <property type="entry name" value="Ribosomal_uL4-like"/>
</dbReference>
<dbReference type="InterPro" id="IPR023574">
    <property type="entry name" value="Ribosomal_uL4_dom_sf"/>
</dbReference>
<dbReference type="NCBIfam" id="TIGR03953">
    <property type="entry name" value="rplD_bact"/>
    <property type="match status" value="1"/>
</dbReference>
<dbReference type="PANTHER" id="PTHR10746">
    <property type="entry name" value="50S RIBOSOMAL PROTEIN L4"/>
    <property type="match status" value="1"/>
</dbReference>
<dbReference type="PANTHER" id="PTHR10746:SF6">
    <property type="entry name" value="LARGE RIBOSOMAL SUBUNIT PROTEIN UL4M"/>
    <property type="match status" value="1"/>
</dbReference>
<dbReference type="Pfam" id="PF00573">
    <property type="entry name" value="Ribosomal_L4"/>
    <property type="match status" value="1"/>
</dbReference>
<dbReference type="SUPFAM" id="SSF52166">
    <property type="entry name" value="Ribosomal protein L4"/>
    <property type="match status" value="1"/>
</dbReference>
<evidence type="ECO:0000255" key="1">
    <source>
        <dbReference type="HAMAP-Rule" id="MF_01328"/>
    </source>
</evidence>
<evidence type="ECO:0000256" key="2">
    <source>
        <dbReference type="SAM" id="MobiDB-lite"/>
    </source>
</evidence>
<evidence type="ECO:0000305" key="3"/>
<feature type="chain" id="PRO_1000052435" description="Large ribosomal subunit protein uL4">
    <location>
        <begin position="1"/>
        <end position="211"/>
    </location>
</feature>
<feature type="region of interest" description="Disordered" evidence="2">
    <location>
        <begin position="63"/>
        <end position="94"/>
    </location>
</feature>
<reference key="1">
    <citation type="submission" date="2006-08" db="EMBL/GenBank/DDBJ databases">
        <title>Complete sequence of Maricaulis maris MCS10.</title>
        <authorList>
            <consortium name="US DOE Joint Genome Institute"/>
            <person name="Copeland A."/>
            <person name="Lucas S."/>
            <person name="Lapidus A."/>
            <person name="Barry K."/>
            <person name="Detter J.C."/>
            <person name="Glavina del Rio T."/>
            <person name="Hammon N."/>
            <person name="Israni S."/>
            <person name="Dalin E."/>
            <person name="Tice H."/>
            <person name="Pitluck S."/>
            <person name="Saunders E."/>
            <person name="Brettin T."/>
            <person name="Bruce D."/>
            <person name="Han C."/>
            <person name="Tapia R."/>
            <person name="Gilna P."/>
            <person name="Schmutz J."/>
            <person name="Larimer F."/>
            <person name="Land M."/>
            <person name="Hauser L."/>
            <person name="Kyrpides N."/>
            <person name="Mikhailova N."/>
            <person name="Viollier P."/>
            <person name="Stephens C."/>
            <person name="Richardson P."/>
        </authorList>
    </citation>
    <scope>NUCLEOTIDE SEQUENCE [LARGE SCALE GENOMIC DNA]</scope>
    <source>
        <strain>MCS10</strain>
    </source>
</reference>
<organism>
    <name type="scientific">Maricaulis maris (strain MCS10)</name>
    <name type="common">Caulobacter maris</name>
    <dbReference type="NCBI Taxonomy" id="394221"/>
    <lineage>
        <taxon>Bacteria</taxon>
        <taxon>Pseudomonadati</taxon>
        <taxon>Pseudomonadota</taxon>
        <taxon>Alphaproteobacteria</taxon>
        <taxon>Maricaulales</taxon>
        <taxon>Maricaulaceae</taxon>
        <taxon>Maricaulis</taxon>
    </lineage>
</organism>